<name>RPOB_PHOPR</name>
<sequence length="1341" mass="149774">MVYSYTEKKRIRKDFGKRPRVLDAPYLLSIQLDSFKKFIEQDPEGHYGLEAAFRSVFPIQSYNGNSELQYVSYRLGEPVFDVKECQIRGVTYSAPLRVKLRLVMYDKDAPAGTVKDIKEQEVYMGEIPLMTDNGTFVINGTERVIVSQLHRSPGVFFDSDKGKTHSSGKVLYNARVIPYRGSWLDFEFDPKDNVFVRIDRRRKLAASVILRALDYTTEQILDMFFDKVSFEVQGKSLVMELVPERLRGETASFDIEANGKVYVEQGRRITARHIRQLGKDGVDQIEVPVEYIVGKISSRDYVNEETGELIAAANQELNLEILALLSQAGHKSIEVLFTNDLDYGPYMSETLRVDSTTDRLSALVEIYRMMRPGEPPTREAAEQLFNSLFFSEDRYDLSAVGRMKFNSSLLREETTGSGILDHSDIIEVMKKLIEIRNGRGEVDDIDHLGNRRIRSVGEMAENQFRVGLVRVERAVKERLSLGDLDAIMPQDLINAKPISAAVKEFFGSSQLSQFMDQNNPLSEVTHKRRISALGPGGLTRERAGFEVRDVHATHYGRLCPIETPEGPNIGLINSLSVYARCNSYGFLETPYRKVVDSKVTDQIDYLSAIEEGQYVIAQANAALETDGSFSDELITARQKGDSGLHPRDHVQYMDVATNQVVSVAASLIPFLEHDDANRALMGANMQRQAVPTLRADKPLVGTGIERSVAVDSGVTAVAKRGGQVQSVDASRIVVKVNEDELVPGEAGIDIYNLTKYTRSNQNTCINQRPTVMPGEPVARGDVLADGPSTDLGELALGQNIRIAFMPWNGYNFEDSILVSERVVQQDRLTTIHIQELSCVARDTKLGSEEITADIPNVGEAALSKLDESGIVYIGAEVKGGDILVGKVTPKGETQLTPEEKLLRAIFGEKASDVKDSSLRVPNSVSGTIIDVQVFTRDGVEKDKRALEIEEMQLKEAKKDITEEFQILEGGLLARVRTLLLSIGYSEEKIASMDRERLFALTLDDESLQNQLEQLAEQYDELKAEFDKKFETKRRKITQGDDLAPGVLKIVKVYLAVKRRIQPGDKMAGRHGNKGVISKICPVEDMPYDEKGQTVEIVLNPLGVPSRMNIGQILETHMGLAAKGIGDKLNEMLKQQQELHKFRNFLQKVYDLGDTRQDVDIAALSDDQVHTLVQNLRDGLPIATPVFDGAPESSIKELLKLGDLPESGQLKMFDGRTGDMFERPVTVGYMYMLKLNHLVDDKMHARSTGSYSLVTQQPLGGKAQFGGQRFGEMEVWALEAYGAAFTLQEMLTVKSDDVNGRTKMYKNIVDGDHRMEPGMPESFNVLLKEIRSLGINIELEDK</sequence>
<proteinExistence type="inferred from homology"/>
<feature type="chain" id="PRO_0000224090" description="DNA-directed RNA polymerase subunit beta">
    <location>
        <begin position="1"/>
        <end position="1341"/>
    </location>
</feature>
<protein>
    <recommendedName>
        <fullName evidence="1">DNA-directed RNA polymerase subunit beta</fullName>
        <shortName evidence="1">RNAP subunit beta</shortName>
        <ecNumber evidence="1">2.7.7.6</ecNumber>
    </recommendedName>
    <alternativeName>
        <fullName evidence="1">RNA polymerase subunit beta</fullName>
    </alternativeName>
    <alternativeName>
        <fullName evidence="1">Transcriptase subunit beta</fullName>
    </alternativeName>
</protein>
<organism>
    <name type="scientific">Photobacterium profundum (strain SS9)</name>
    <dbReference type="NCBI Taxonomy" id="298386"/>
    <lineage>
        <taxon>Bacteria</taxon>
        <taxon>Pseudomonadati</taxon>
        <taxon>Pseudomonadota</taxon>
        <taxon>Gammaproteobacteria</taxon>
        <taxon>Vibrionales</taxon>
        <taxon>Vibrionaceae</taxon>
        <taxon>Photobacterium</taxon>
    </lineage>
</organism>
<evidence type="ECO:0000255" key="1">
    <source>
        <dbReference type="HAMAP-Rule" id="MF_01321"/>
    </source>
</evidence>
<accession>Q6LLW2</accession>
<gene>
    <name evidence="1" type="primary">rpoB</name>
    <name type="ordered locus">PBPRA3432</name>
</gene>
<comment type="function">
    <text evidence="1">DNA-dependent RNA polymerase catalyzes the transcription of DNA into RNA using the four ribonucleoside triphosphates as substrates.</text>
</comment>
<comment type="catalytic activity">
    <reaction evidence="1">
        <text>RNA(n) + a ribonucleoside 5'-triphosphate = RNA(n+1) + diphosphate</text>
        <dbReference type="Rhea" id="RHEA:21248"/>
        <dbReference type="Rhea" id="RHEA-COMP:14527"/>
        <dbReference type="Rhea" id="RHEA-COMP:17342"/>
        <dbReference type="ChEBI" id="CHEBI:33019"/>
        <dbReference type="ChEBI" id="CHEBI:61557"/>
        <dbReference type="ChEBI" id="CHEBI:140395"/>
        <dbReference type="EC" id="2.7.7.6"/>
    </reaction>
</comment>
<comment type="subunit">
    <text evidence="1">The RNAP catalytic core consists of 2 alpha, 1 beta, 1 beta' and 1 omega subunit. When a sigma factor is associated with the core the holoenzyme is formed, which can initiate transcription.</text>
</comment>
<comment type="similarity">
    <text evidence="1">Belongs to the RNA polymerase beta chain family.</text>
</comment>
<dbReference type="EC" id="2.7.7.6" evidence="1"/>
<dbReference type="EMBL" id="CR378674">
    <property type="protein sequence ID" value="CAG21716.1"/>
    <property type="molecule type" value="Genomic_DNA"/>
</dbReference>
<dbReference type="RefSeq" id="WP_011219958.1">
    <property type="nucleotide sequence ID" value="NC_006370.1"/>
</dbReference>
<dbReference type="SMR" id="Q6LLW2"/>
<dbReference type="STRING" id="298386.PBPRA3432"/>
<dbReference type="KEGG" id="ppr:PBPRA3432"/>
<dbReference type="eggNOG" id="COG0085">
    <property type="taxonomic scope" value="Bacteria"/>
</dbReference>
<dbReference type="HOGENOM" id="CLU_000524_4_0_6"/>
<dbReference type="Proteomes" id="UP000000593">
    <property type="component" value="Chromosome 1"/>
</dbReference>
<dbReference type="GO" id="GO:0000428">
    <property type="term" value="C:DNA-directed RNA polymerase complex"/>
    <property type="evidence" value="ECO:0007669"/>
    <property type="project" value="UniProtKB-KW"/>
</dbReference>
<dbReference type="GO" id="GO:0003677">
    <property type="term" value="F:DNA binding"/>
    <property type="evidence" value="ECO:0007669"/>
    <property type="project" value="UniProtKB-UniRule"/>
</dbReference>
<dbReference type="GO" id="GO:0003899">
    <property type="term" value="F:DNA-directed RNA polymerase activity"/>
    <property type="evidence" value="ECO:0007669"/>
    <property type="project" value="UniProtKB-UniRule"/>
</dbReference>
<dbReference type="GO" id="GO:0032549">
    <property type="term" value="F:ribonucleoside binding"/>
    <property type="evidence" value="ECO:0007669"/>
    <property type="project" value="InterPro"/>
</dbReference>
<dbReference type="GO" id="GO:0006351">
    <property type="term" value="P:DNA-templated transcription"/>
    <property type="evidence" value="ECO:0007669"/>
    <property type="project" value="UniProtKB-UniRule"/>
</dbReference>
<dbReference type="CDD" id="cd00653">
    <property type="entry name" value="RNA_pol_B_RPB2"/>
    <property type="match status" value="1"/>
</dbReference>
<dbReference type="FunFam" id="2.40.270.10:FF:000004">
    <property type="entry name" value="DNA-directed RNA polymerase subunit beta"/>
    <property type="match status" value="1"/>
</dbReference>
<dbReference type="FunFam" id="2.40.50.100:FF:000006">
    <property type="entry name" value="DNA-directed RNA polymerase subunit beta"/>
    <property type="match status" value="1"/>
</dbReference>
<dbReference type="FunFam" id="2.40.50.150:FF:000001">
    <property type="entry name" value="DNA-directed RNA polymerase subunit beta"/>
    <property type="match status" value="1"/>
</dbReference>
<dbReference type="FunFam" id="3.90.1100.10:FF:000002">
    <property type="entry name" value="DNA-directed RNA polymerase subunit beta"/>
    <property type="match status" value="1"/>
</dbReference>
<dbReference type="FunFam" id="3.90.1110.10:FF:000001">
    <property type="entry name" value="DNA-directed RNA polymerase subunit beta"/>
    <property type="match status" value="1"/>
</dbReference>
<dbReference type="FunFam" id="3.90.1110.10:FF:000004">
    <property type="entry name" value="DNA-directed RNA polymerase subunit beta"/>
    <property type="match status" value="1"/>
</dbReference>
<dbReference type="FunFam" id="3.90.1800.10:FF:000001">
    <property type="entry name" value="DNA-directed RNA polymerase subunit beta"/>
    <property type="match status" value="1"/>
</dbReference>
<dbReference type="Gene3D" id="2.40.50.100">
    <property type="match status" value="1"/>
</dbReference>
<dbReference type="Gene3D" id="2.40.50.150">
    <property type="match status" value="1"/>
</dbReference>
<dbReference type="Gene3D" id="3.90.1100.10">
    <property type="match status" value="2"/>
</dbReference>
<dbReference type="Gene3D" id="6.10.140.1670">
    <property type="match status" value="1"/>
</dbReference>
<dbReference type="Gene3D" id="2.30.150.10">
    <property type="entry name" value="DNA-directed RNA polymerase, beta subunit, external 1 domain"/>
    <property type="match status" value="1"/>
</dbReference>
<dbReference type="Gene3D" id="2.40.270.10">
    <property type="entry name" value="DNA-directed RNA polymerase, subunit 2, domain 6"/>
    <property type="match status" value="1"/>
</dbReference>
<dbReference type="Gene3D" id="3.90.1800.10">
    <property type="entry name" value="RNA polymerase alpha subunit dimerisation domain"/>
    <property type="match status" value="1"/>
</dbReference>
<dbReference type="Gene3D" id="3.90.1110.10">
    <property type="entry name" value="RNA polymerase Rpb2, domain 2"/>
    <property type="match status" value="1"/>
</dbReference>
<dbReference type="HAMAP" id="MF_01321">
    <property type="entry name" value="RNApol_bact_RpoB"/>
    <property type="match status" value="1"/>
</dbReference>
<dbReference type="InterPro" id="IPR042107">
    <property type="entry name" value="DNA-dir_RNA_pol_bsu_ext_1_sf"/>
</dbReference>
<dbReference type="InterPro" id="IPR019462">
    <property type="entry name" value="DNA-dir_RNA_pol_bsu_external_1"/>
</dbReference>
<dbReference type="InterPro" id="IPR015712">
    <property type="entry name" value="DNA-dir_RNA_pol_su2"/>
</dbReference>
<dbReference type="InterPro" id="IPR007120">
    <property type="entry name" value="DNA-dir_RNAP_su2_dom"/>
</dbReference>
<dbReference type="InterPro" id="IPR037033">
    <property type="entry name" value="DNA-dir_RNAP_su2_hyb_sf"/>
</dbReference>
<dbReference type="InterPro" id="IPR010243">
    <property type="entry name" value="RNA_pol_bsu_bac"/>
</dbReference>
<dbReference type="InterPro" id="IPR007121">
    <property type="entry name" value="RNA_pol_bsu_CS"/>
</dbReference>
<dbReference type="InterPro" id="IPR007644">
    <property type="entry name" value="RNA_pol_bsu_protrusion"/>
</dbReference>
<dbReference type="InterPro" id="IPR007642">
    <property type="entry name" value="RNA_pol_Rpb2_2"/>
</dbReference>
<dbReference type="InterPro" id="IPR037034">
    <property type="entry name" value="RNA_pol_Rpb2_2_sf"/>
</dbReference>
<dbReference type="InterPro" id="IPR007645">
    <property type="entry name" value="RNA_pol_Rpb2_3"/>
</dbReference>
<dbReference type="InterPro" id="IPR007641">
    <property type="entry name" value="RNA_pol_Rpb2_7"/>
</dbReference>
<dbReference type="InterPro" id="IPR014724">
    <property type="entry name" value="RNA_pol_RPB2_OB-fold"/>
</dbReference>
<dbReference type="NCBIfam" id="NF001616">
    <property type="entry name" value="PRK00405.1"/>
    <property type="match status" value="1"/>
</dbReference>
<dbReference type="NCBIfam" id="TIGR02013">
    <property type="entry name" value="rpoB"/>
    <property type="match status" value="1"/>
</dbReference>
<dbReference type="PANTHER" id="PTHR20856">
    <property type="entry name" value="DNA-DIRECTED RNA POLYMERASE I SUBUNIT 2"/>
    <property type="match status" value="1"/>
</dbReference>
<dbReference type="Pfam" id="PF04563">
    <property type="entry name" value="RNA_pol_Rpb2_1"/>
    <property type="match status" value="1"/>
</dbReference>
<dbReference type="Pfam" id="PF04561">
    <property type="entry name" value="RNA_pol_Rpb2_2"/>
    <property type="match status" value="2"/>
</dbReference>
<dbReference type="Pfam" id="PF04565">
    <property type="entry name" value="RNA_pol_Rpb2_3"/>
    <property type="match status" value="1"/>
</dbReference>
<dbReference type="Pfam" id="PF10385">
    <property type="entry name" value="RNA_pol_Rpb2_45"/>
    <property type="match status" value="1"/>
</dbReference>
<dbReference type="Pfam" id="PF00562">
    <property type="entry name" value="RNA_pol_Rpb2_6"/>
    <property type="match status" value="1"/>
</dbReference>
<dbReference type="Pfam" id="PF04560">
    <property type="entry name" value="RNA_pol_Rpb2_7"/>
    <property type="match status" value="1"/>
</dbReference>
<dbReference type="SUPFAM" id="SSF64484">
    <property type="entry name" value="beta and beta-prime subunits of DNA dependent RNA-polymerase"/>
    <property type="match status" value="1"/>
</dbReference>
<dbReference type="PROSITE" id="PS01166">
    <property type="entry name" value="RNA_POL_BETA"/>
    <property type="match status" value="1"/>
</dbReference>
<reference key="1">
    <citation type="journal article" date="2005" name="Science">
        <title>Life at depth: Photobacterium profundum genome sequence and expression analysis.</title>
        <authorList>
            <person name="Vezzi A."/>
            <person name="Campanaro S."/>
            <person name="D'Angelo M."/>
            <person name="Simonato F."/>
            <person name="Vitulo N."/>
            <person name="Lauro F.M."/>
            <person name="Cestaro A."/>
            <person name="Malacrida G."/>
            <person name="Simionati B."/>
            <person name="Cannata N."/>
            <person name="Romualdi C."/>
            <person name="Bartlett D.H."/>
            <person name="Valle G."/>
        </authorList>
    </citation>
    <scope>NUCLEOTIDE SEQUENCE [LARGE SCALE GENOMIC DNA]</scope>
    <source>
        <strain>ATCC BAA-1253 / SS9</strain>
    </source>
</reference>
<keyword id="KW-0240">DNA-directed RNA polymerase</keyword>
<keyword id="KW-0548">Nucleotidyltransferase</keyword>
<keyword id="KW-1185">Reference proteome</keyword>
<keyword id="KW-0804">Transcription</keyword>
<keyword id="KW-0808">Transferase</keyword>